<proteinExistence type="inferred from homology"/>
<sequence length="1067" mass="116893">MSWLRSSPLRQSGNGGGGGVSTGHSSTGSLRQRPIDAATDCDPRACYDSFCKHWQQAYDIIQHYAPPTHDDVLGVVSHLDYMVTLLLVELHHCNKVSLPSTDASAAPAAPCLEYLLSENLLDKLYEWACTTGRYANAVRLEQLKLYELLVSHSRHQLLCHEPFLRPLLKILASSQGEIFPPDLEKRLVILLNQLCVVLMQNVHLLDLFFFSAQTQVQEQIQNGNVPPPKSGTTTNFIIFSLLIPYVHREGSLGHQARDALLLCMALSQKNSNIGTYIAQYSSICPLLVTGLGGLYSRLPNSIEISSIDWHRITPDDVTEIPELTLFMNALEFCNAVVQVAHEMIKQQLLDFMYQGFIVPVLGPAVLQTLKGKHFQTNIDSQISAMSYLDLILRSITEPGLLRAFVKFLLDTEKFDGERILDSLVERLNSPDANLCMVTMALFDTLLGLHCEDLMLELLLKFMLPGKHVPISHRHKINKIDPYLNSSDFFLELSPDVLKRARDLARPKSVHEQQPPSGATGEQPIQPLAWPSLPSPVMSKTIGANWNYYGLHTGDSLYANLQAYLFEAHWRIAQCQRDCLKWANSYRYQKWPRHGQARVHAHALELARQFFSEFGGGPPAIASESAGEKQLDSLQSIGESSGYESFKWRPADEESDATDLTVTTTTTTASEADLEHNSSSISSGMGGGGGAAAGRRGEAWRISHTNRNELLLTDLDFSEDLFAQGTVSLGPFLNAIWGKLQTFTSNSLYVNLHLTGLITRLAWYPLPLIHSLLLRSDIAITSDTPSFHQVLRILKQQIDAELPVTEDSLEIIDVARSSLIDREFRLVNARKGNENSPLHHHQQPQTTLSQQQQQQQGQQRSAYATLSAATPVQATQTSAYDPFKRSDNKRKSISKSISSMFSRRSTPNPPSSAGAASTLVGNNNSGSGQSQPFSSTGTGTCETSLSTNPQSGAAAARSTGTATTANGNSSNSNISIGGSTQTLSGHSNTTTYSSSTLHGLDGGPQTGSFNSEPASLDSVASMGIIASTSGTERTRDVALCAVLLDEWLKELAAIAQEQSVVLVTDQLL</sequence>
<name>U518_DROPE</name>
<keyword id="KW-0597">Phosphoprotein</keyword>
<keyword id="KW-1185">Reference proteome</keyword>
<protein>
    <recommendedName>
        <fullName>FHIP family protein GL19323</fullName>
    </recommendedName>
</protein>
<comment type="similarity">
    <text evidence="3">Belongs to the FHIP family.</text>
</comment>
<feature type="chain" id="PRO_0000379011" description="FHIP family protein GL19323">
    <location>
        <begin position="1"/>
        <end position="1067"/>
    </location>
</feature>
<feature type="region of interest" description="Disordered" evidence="2">
    <location>
        <begin position="1"/>
        <end position="31"/>
    </location>
</feature>
<feature type="region of interest" description="Disordered" evidence="2">
    <location>
        <begin position="503"/>
        <end position="525"/>
    </location>
</feature>
<feature type="region of interest" description="Disordered" evidence="2">
    <location>
        <begin position="832"/>
        <end position="1013"/>
    </location>
</feature>
<feature type="compositionally biased region" description="Polar residues" evidence="2">
    <location>
        <begin position="1"/>
        <end position="11"/>
    </location>
</feature>
<feature type="compositionally biased region" description="Low complexity" evidence="2">
    <location>
        <begin position="842"/>
        <end position="858"/>
    </location>
</feature>
<feature type="compositionally biased region" description="Polar residues" evidence="2">
    <location>
        <begin position="859"/>
        <end position="878"/>
    </location>
</feature>
<feature type="compositionally biased region" description="Low complexity" evidence="2">
    <location>
        <begin position="893"/>
        <end position="904"/>
    </location>
</feature>
<feature type="compositionally biased region" description="Polar residues" evidence="2">
    <location>
        <begin position="918"/>
        <end position="949"/>
    </location>
</feature>
<feature type="compositionally biased region" description="Low complexity" evidence="2">
    <location>
        <begin position="950"/>
        <end position="979"/>
    </location>
</feature>
<feature type="compositionally biased region" description="Polar residues" evidence="2">
    <location>
        <begin position="980"/>
        <end position="996"/>
    </location>
</feature>
<feature type="modified residue" description="Phosphoserine" evidence="1">
    <location>
        <position position="508"/>
    </location>
</feature>
<feature type="modified residue" description="Phosphoserine" evidence="1">
    <location>
        <position position="835"/>
    </location>
</feature>
<dbReference type="EMBL" id="CH479180">
    <property type="protein sequence ID" value="EDW28713.1"/>
    <property type="molecule type" value="Genomic_DNA"/>
</dbReference>
<dbReference type="SMR" id="B4G8N3"/>
<dbReference type="STRING" id="7234.B4G8N3"/>
<dbReference type="EnsemblMetazoa" id="FBtr0184938">
    <property type="protein sequence ID" value="FBpp0183430"/>
    <property type="gene ID" value="FBgn0156922"/>
</dbReference>
<dbReference type="EnsemblMetazoa" id="XM_002014681.2">
    <property type="protein sequence ID" value="XP_002014717.1"/>
    <property type="gene ID" value="LOC6589774"/>
</dbReference>
<dbReference type="GeneID" id="6589774"/>
<dbReference type="KEGG" id="dpe:6589774"/>
<dbReference type="eggNOG" id="KOG3695">
    <property type="taxonomic scope" value="Eukaryota"/>
</dbReference>
<dbReference type="HOGENOM" id="CLU_007807_0_0_1"/>
<dbReference type="OMA" id="RMPSLVQ"/>
<dbReference type="OrthoDB" id="6287422at2759"/>
<dbReference type="PhylomeDB" id="B4G8N3"/>
<dbReference type="Proteomes" id="UP000008744">
    <property type="component" value="Unassembled WGS sequence"/>
</dbReference>
<dbReference type="InterPro" id="IPR019384">
    <property type="entry name" value="FHIP"/>
</dbReference>
<dbReference type="InterPro" id="IPR045669">
    <property type="entry name" value="FHIP_C"/>
</dbReference>
<dbReference type="InterPro" id="IPR045668">
    <property type="entry name" value="FHIP_KELAA_motif"/>
</dbReference>
<dbReference type="PANTHER" id="PTHR21705:SF11">
    <property type="entry name" value="FHIP FAMILY PROTEIN CG3558"/>
    <property type="match status" value="1"/>
</dbReference>
<dbReference type="PANTHER" id="PTHR21705">
    <property type="entry name" value="RAI16 PROTEIN-RELATED"/>
    <property type="match status" value="1"/>
</dbReference>
<dbReference type="Pfam" id="PF19314">
    <property type="entry name" value="DUF5917"/>
    <property type="match status" value="1"/>
</dbReference>
<dbReference type="Pfam" id="PF19311">
    <property type="entry name" value="KELAA"/>
    <property type="match status" value="1"/>
</dbReference>
<dbReference type="Pfam" id="PF10257">
    <property type="entry name" value="RAI16-like"/>
    <property type="match status" value="1"/>
</dbReference>
<evidence type="ECO:0000250" key="1"/>
<evidence type="ECO:0000256" key="2">
    <source>
        <dbReference type="SAM" id="MobiDB-lite"/>
    </source>
</evidence>
<evidence type="ECO:0000305" key="3"/>
<accession>B4G8N3</accession>
<organism>
    <name type="scientific">Drosophila persimilis</name>
    <name type="common">Fruit fly</name>
    <dbReference type="NCBI Taxonomy" id="7234"/>
    <lineage>
        <taxon>Eukaryota</taxon>
        <taxon>Metazoa</taxon>
        <taxon>Ecdysozoa</taxon>
        <taxon>Arthropoda</taxon>
        <taxon>Hexapoda</taxon>
        <taxon>Insecta</taxon>
        <taxon>Pterygota</taxon>
        <taxon>Neoptera</taxon>
        <taxon>Endopterygota</taxon>
        <taxon>Diptera</taxon>
        <taxon>Brachycera</taxon>
        <taxon>Muscomorpha</taxon>
        <taxon>Ephydroidea</taxon>
        <taxon>Drosophilidae</taxon>
        <taxon>Drosophila</taxon>
        <taxon>Sophophora</taxon>
    </lineage>
</organism>
<gene>
    <name type="ORF">GL19323</name>
</gene>
<reference key="1">
    <citation type="journal article" date="2007" name="Nature">
        <title>Evolution of genes and genomes on the Drosophila phylogeny.</title>
        <authorList>
            <consortium name="Drosophila 12 genomes consortium"/>
        </authorList>
    </citation>
    <scope>NUCLEOTIDE SEQUENCE [LARGE SCALE GENOMIC DNA]</scope>
    <source>
        <strain>MSH-3 / Tucson 14011-0111.49</strain>
    </source>
</reference>